<accession>B8I2Z7</accession>
<reference key="1">
    <citation type="submission" date="2009-01" db="EMBL/GenBank/DDBJ databases">
        <title>Complete sequence of Clostridium cellulolyticum H10.</title>
        <authorList>
            <consortium name="US DOE Joint Genome Institute"/>
            <person name="Lucas S."/>
            <person name="Copeland A."/>
            <person name="Lapidus A."/>
            <person name="Glavina del Rio T."/>
            <person name="Dalin E."/>
            <person name="Tice H."/>
            <person name="Bruce D."/>
            <person name="Goodwin L."/>
            <person name="Pitluck S."/>
            <person name="Chertkov O."/>
            <person name="Saunders E."/>
            <person name="Brettin T."/>
            <person name="Detter J.C."/>
            <person name="Han C."/>
            <person name="Larimer F."/>
            <person name="Land M."/>
            <person name="Hauser L."/>
            <person name="Kyrpides N."/>
            <person name="Ivanova N."/>
            <person name="Zhou J."/>
            <person name="Richardson P."/>
        </authorList>
    </citation>
    <scope>NUCLEOTIDE SEQUENCE [LARGE SCALE GENOMIC DNA]</scope>
    <source>
        <strain>ATCC 35319 / DSM 5812 / JCM 6584 / H10</strain>
    </source>
</reference>
<dbReference type="EC" id="2.7.7.6" evidence="1"/>
<dbReference type="EMBL" id="CP001348">
    <property type="protein sequence ID" value="ACL76140.1"/>
    <property type="molecule type" value="Genomic_DNA"/>
</dbReference>
<dbReference type="RefSeq" id="WP_015925255.1">
    <property type="nucleotide sequence ID" value="NC_011898.1"/>
</dbReference>
<dbReference type="SMR" id="B8I2Z7"/>
<dbReference type="STRING" id="394503.Ccel_1790"/>
<dbReference type="KEGG" id="cce:Ccel_1790"/>
<dbReference type="eggNOG" id="COG1758">
    <property type="taxonomic scope" value="Bacteria"/>
</dbReference>
<dbReference type="HOGENOM" id="CLU_125406_6_1_9"/>
<dbReference type="OrthoDB" id="9815459at2"/>
<dbReference type="Proteomes" id="UP000001349">
    <property type="component" value="Chromosome"/>
</dbReference>
<dbReference type="GO" id="GO:0000428">
    <property type="term" value="C:DNA-directed RNA polymerase complex"/>
    <property type="evidence" value="ECO:0007669"/>
    <property type="project" value="UniProtKB-KW"/>
</dbReference>
<dbReference type="GO" id="GO:0003677">
    <property type="term" value="F:DNA binding"/>
    <property type="evidence" value="ECO:0007669"/>
    <property type="project" value="UniProtKB-UniRule"/>
</dbReference>
<dbReference type="GO" id="GO:0003899">
    <property type="term" value="F:DNA-directed RNA polymerase activity"/>
    <property type="evidence" value="ECO:0007669"/>
    <property type="project" value="UniProtKB-UniRule"/>
</dbReference>
<dbReference type="GO" id="GO:0006351">
    <property type="term" value="P:DNA-templated transcription"/>
    <property type="evidence" value="ECO:0007669"/>
    <property type="project" value="UniProtKB-UniRule"/>
</dbReference>
<dbReference type="Gene3D" id="3.90.940.10">
    <property type="match status" value="1"/>
</dbReference>
<dbReference type="HAMAP" id="MF_00366">
    <property type="entry name" value="RNApol_bact_RpoZ"/>
    <property type="match status" value="1"/>
</dbReference>
<dbReference type="InterPro" id="IPR003716">
    <property type="entry name" value="DNA-dir_RNA_pol_omega"/>
</dbReference>
<dbReference type="InterPro" id="IPR006110">
    <property type="entry name" value="Pol_omega/Rpo6/RPB6"/>
</dbReference>
<dbReference type="InterPro" id="IPR036161">
    <property type="entry name" value="RPB6/omega-like_sf"/>
</dbReference>
<dbReference type="NCBIfam" id="TIGR00690">
    <property type="entry name" value="rpoZ"/>
    <property type="match status" value="1"/>
</dbReference>
<dbReference type="PANTHER" id="PTHR34476">
    <property type="entry name" value="DNA-DIRECTED RNA POLYMERASE SUBUNIT OMEGA"/>
    <property type="match status" value="1"/>
</dbReference>
<dbReference type="PANTHER" id="PTHR34476:SF1">
    <property type="entry name" value="DNA-DIRECTED RNA POLYMERASE SUBUNIT OMEGA"/>
    <property type="match status" value="1"/>
</dbReference>
<dbReference type="Pfam" id="PF01192">
    <property type="entry name" value="RNA_pol_Rpb6"/>
    <property type="match status" value="1"/>
</dbReference>
<dbReference type="SMART" id="SM01409">
    <property type="entry name" value="RNA_pol_Rpb6"/>
    <property type="match status" value="1"/>
</dbReference>
<dbReference type="SUPFAM" id="SSF63562">
    <property type="entry name" value="RPB6/omega subunit-like"/>
    <property type="match status" value="1"/>
</dbReference>
<name>RPOZ_RUMCH</name>
<proteinExistence type="inferred from homology"/>
<feature type="chain" id="PRO_1000194787" description="DNA-directed RNA polymerase subunit omega">
    <location>
        <begin position="1"/>
        <end position="68"/>
    </location>
</feature>
<keyword id="KW-0240">DNA-directed RNA polymerase</keyword>
<keyword id="KW-0548">Nucleotidyltransferase</keyword>
<keyword id="KW-1185">Reference proteome</keyword>
<keyword id="KW-0804">Transcription</keyword>
<keyword id="KW-0808">Transferase</keyword>
<evidence type="ECO:0000255" key="1">
    <source>
        <dbReference type="HAMAP-Rule" id="MF_00366"/>
    </source>
</evidence>
<organism>
    <name type="scientific">Ruminiclostridium cellulolyticum (strain ATCC 35319 / DSM 5812 / JCM 6584 / H10)</name>
    <name type="common">Clostridium cellulolyticum</name>
    <dbReference type="NCBI Taxonomy" id="394503"/>
    <lineage>
        <taxon>Bacteria</taxon>
        <taxon>Bacillati</taxon>
        <taxon>Bacillota</taxon>
        <taxon>Clostridia</taxon>
        <taxon>Eubacteriales</taxon>
        <taxon>Oscillospiraceae</taxon>
        <taxon>Ruminiclostridium</taxon>
    </lineage>
</organism>
<gene>
    <name evidence="1" type="primary">rpoZ</name>
    <name type="ordered locus">Ccel_1790</name>
</gene>
<sequence>MIYPSINELMKKVDSRYTLAVEAAKRARQLVDGATKMAKCDSDKEVTIAINEIAEDKITYVRTKSGIK</sequence>
<comment type="function">
    <text evidence="1">Promotes RNA polymerase assembly. Latches the N- and C-terminal regions of the beta' subunit thereby facilitating its interaction with the beta and alpha subunits.</text>
</comment>
<comment type="catalytic activity">
    <reaction evidence="1">
        <text>RNA(n) + a ribonucleoside 5'-triphosphate = RNA(n+1) + diphosphate</text>
        <dbReference type="Rhea" id="RHEA:21248"/>
        <dbReference type="Rhea" id="RHEA-COMP:14527"/>
        <dbReference type="Rhea" id="RHEA-COMP:17342"/>
        <dbReference type="ChEBI" id="CHEBI:33019"/>
        <dbReference type="ChEBI" id="CHEBI:61557"/>
        <dbReference type="ChEBI" id="CHEBI:140395"/>
        <dbReference type="EC" id="2.7.7.6"/>
    </reaction>
</comment>
<comment type="subunit">
    <text evidence="1">The RNAP catalytic core consists of 2 alpha, 1 beta, 1 beta' and 1 omega subunit. When a sigma factor is associated with the core the holoenzyme is formed, which can initiate transcription.</text>
</comment>
<comment type="similarity">
    <text evidence="1">Belongs to the RNA polymerase subunit omega family.</text>
</comment>
<protein>
    <recommendedName>
        <fullName evidence="1">DNA-directed RNA polymerase subunit omega</fullName>
        <shortName evidence="1">RNAP omega subunit</shortName>
        <ecNumber evidence="1">2.7.7.6</ecNumber>
    </recommendedName>
    <alternativeName>
        <fullName evidence="1">RNA polymerase omega subunit</fullName>
    </alternativeName>
    <alternativeName>
        <fullName evidence="1">Transcriptase subunit omega</fullName>
    </alternativeName>
</protein>